<reference key="1">
    <citation type="journal article" date="2003" name="Nature">
        <title>Genome divergence in two Prochlorococcus ecotypes reflects oceanic niche differentiation.</title>
        <authorList>
            <person name="Rocap G."/>
            <person name="Larimer F.W."/>
            <person name="Lamerdin J.E."/>
            <person name="Malfatti S."/>
            <person name="Chain P."/>
            <person name="Ahlgren N.A."/>
            <person name="Arellano A."/>
            <person name="Coleman M."/>
            <person name="Hauser L."/>
            <person name="Hess W.R."/>
            <person name="Johnson Z.I."/>
            <person name="Land M.L."/>
            <person name="Lindell D."/>
            <person name="Post A.F."/>
            <person name="Regala W."/>
            <person name="Shah M."/>
            <person name="Shaw S.L."/>
            <person name="Steglich C."/>
            <person name="Sullivan M.B."/>
            <person name="Ting C.S."/>
            <person name="Tolonen A."/>
            <person name="Webb E.A."/>
            <person name="Zinser E.R."/>
            <person name="Chisholm S.W."/>
        </authorList>
    </citation>
    <scope>NUCLEOTIDE SEQUENCE [LARGE SCALE GENOMIC DNA]</scope>
    <source>
        <strain>CCMP1986 / NIES-2087 / MED4</strain>
    </source>
</reference>
<reference key="2">
    <citation type="journal article" date="2012" name="J. Bacteriol.">
        <title>Isolation and characterization of the Prochlorococcus carboxysome reveal the presence of the novel shell protein CsoS1D.</title>
        <authorList>
            <person name="Roberts E.W."/>
            <person name="Cai F."/>
            <person name="Kerfeld C.A."/>
            <person name="Cannon G.C."/>
            <person name="Heinhorst S."/>
        </authorList>
    </citation>
    <scope>PROTEIN ABUNDANCE</scope>
    <scope>SUBCELLULAR LOCATION</scope>
    <source>
        <strain>CCMP1986 / NIES-2087 / MED4</strain>
    </source>
</reference>
<reference key="3">
    <citation type="journal article" date="2015" name="Life">
        <title>Advances in Understanding Carboxysome Assembly in Prochlorococcus and Synechococcus Implicate CsoS2 as a Critical Component.</title>
        <authorList>
            <person name="Cai F."/>
            <person name="Dou Z."/>
            <person name="Bernstein S.L."/>
            <person name="Leverenz R."/>
            <person name="Williams E.B."/>
            <person name="Heinhorst S."/>
            <person name="Shively J."/>
            <person name="Cannon G.C."/>
            <person name="Kerfeld C.A."/>
        </authorList>
    </citation>
    <scope>SUBUNIT</scope>
    <source>
        <strain>CCMP1986 / NIES-2087 / MED4</strain>
    </source>
</reference>
<evidence type="ECO:0000250" key="1">
    <source>
        <dbReference type="UniProtKB" id="P45689"/>
    </source>
</evidence>
<evidence type="ECO:0000255" key="2">
    <source>
        <dbReference type="PROSITE-ProRule" id="PRU01278"/>
    </source>
</evidence>
<evidence type="ECO:0000269" key="3">
    <source>
    </source>
</evidence>
<evidence type="ECO:0000269" key="4">
    <source>
    </source>
</evidence>
<evidence type="ECO:0000303" key="5">
    <source>
    </source>
</evidence>
<evidence type="ECO:0000305" key="6"/>
<feature type="chain" id="PRO_0000201501" description="Major carboxysome shell protein CsoS1">
    <location>
        <begin position="1"/>
        <end position="103"/>
    </location>
</feature>
<feature type="domain" description="BMC" evidence="2">
    <location>
        <begin position="9"/>
        <end position="94"/>
    </location>
</feature>
<gene>
    <name evidence="5" type="primary">csoS1</name>
    <name type="ordered locus">PMM0549</name>
</gene>
<dbReference type="EMBL" id="BX548174">
    <property type="protein sequence ID" value="CAE19008.1"/>
    <property type="status" value="ALT_INIT"/>
    <property type="molecule type" value="Genomic_DNA"/>
</dbReference>
<dbReference type="RefSeq" id="WP_011819929.1">
    <property type="nucleotide sequence ID" value="NC_005072.1"/>
</dbReference>
<dbReference type="PDB" id="8WXB">
    <property type="method" value="EM"/>
    <property type="resolution" value="4.20 A"/>
    <property type="chains" value="A/B/C/D/E/F/G/H/I/J/K/L/M/N/O/P/Q/R/S/T/U/V/W/X/a/b/c/d/e/f=6-103"/>
</dbReference>
<dbReference type="PDBsum" id="8WXB"/>
<dbReference type="EMDB" id="EMD-37902"/>
<dbReference type="SMR" id="Q7V2D1"/>
<dbReference type="STRING" id="59919.PMM0549"/>
<dbReference type="KEGG" id="pmm:PMM0549"/>
<dbReference type="eggNOG" id="COG4577">
    <property type="taxonomic scope" value="Bacteria"/>
</dbReference>
<dbReference type="HOGENOM" id="CLU_064903_5_3_3"/>
<dbReference type="OrthoDB" id="5296101at2"/>
<dbReference type="Proteomes" id="UP000001026">
    <property type="component" value="Chromosome"/>
</dbReference>
<dbReference type="GO" id="GO:0031470">
    <property type="term" value="C:carboxysome"/>
    <property type="evidence" value="ECO:0007669"/>
    <property type="project" value="UniProtKB-SubCell"/>
</dbReference>
<dbReference type="GO" id="GO:0043886">
    <property type="term" value="F:structural constituent of carboxysome shell"/>
    <property type="evidence" value="ECO:0007669"/>
    <property type="project" value="UniProtKB-ARBA"/>
</dbReference>
<dbReference type="GO" id="GO:0015977">
    <property type="term" value="P:carbon fixation"/>
    <property type="evidence" value="ECO:0007669"/>
    <property type="project" value="UniProtKB-KW"/>
</dbReference>
<dbReference type="GO" id="GO:0015979">
    <property type="term" value="P:photosynthesis"/>
    <property type="evidence" value="ECO:0007669"/>
    <property type="project" value="UniProtKB-KW"/>
</dbReference>
<dbReference type="CDD" id="cd07058">
    <property type="entry name" value="BMC_CsoS1"/>
    <property type="match status" value="1"/>
</dbReference>
<dbReference type="Gene3D" id="3.30.70.1710">
    <property type="match status" value="1"/>
</dbReference>
<dbReference type="InterPro" id="IPR020808">
    <property type="entry name" value="Bact_microcomp_CS"/>
</dbReference>
<dbReference type="InterPro" id="IPR000249">
    <property type="entry name" value="BMC_dom"/>
</dbReference>
<dbReference type="InterPro" id="IPR050575">
    <property type="entry name" value="BMC_shell"/>
</dbReference>
<dbReference type="InterPro" id="IPR037233">
    <property type="entry name" value="CcmK-like_sf"/>
</dbReference>
<dbReference type="InterPro" id="IPR044872">
    <property type="entry name" value="CcmK/CsoS1_BMC"/>
</dbReference>
<dbReference type="PANTHER" id="PTHR33941:SF11">
    <property type="entry name" value="BACTERIAL MICROCOMPARTMENT SHELL PROTEIN PDUJ"/>
    <property type="match status" value="1"/>
</dbReference>
<dbReference type="PANTHER" id="PTHR33941">
    <property type="entry name" value="PROPANEDIOL UTILIZATION PROTEIN PDUA"/>
    <property type="match status" value="1"/>
</dbReference>
<dbReference type="Pfam" id="PF00936">
    <property type="entry name" value="BMC"/>
    <property type="match status" value="1"/>
</dbReference>
<dbReference type="SMART" id="SM00877">
    <property type="entry name" value="BMC"/>
    <property type="match status" value="1"/>
</dbReference>
<dbReference type="SUPFAM" id="SSF143414">
    <property type="entry name" value="CcmK-like"/>
    <property type="match status" value="1"/>
</dbReference>
<dbReference type="PROSITE" id="PS01139">
    <property type="entry name" value="BMC_1"/>
    <property type="match status" value="1"/>
</dbReference>
<dbReference type="PROSITE" id="PS51930">
    <property type="entry name" value="BMC_2"/>
    <property type="match status" value="1"/>
</dbReference>
<sequence>MATETMGIALGMIETRGLVPAIEAADAMTKAAEVRLIGREFVGGGYVTVLVRGETGAVNAAVRAGADACERVGDGLVAAHIIARPHREVEPALGNGDFLGQKD</sequence>
<protein>
    <recommendedName>
        <fullName evidence="5">Major carboxysome shell protein CsoS1</fullName>
    </recommendedName>
</protein>
<name>CSOS1_PROMP</name>
<keyword id="KW-0002">3D-structure</keyword>
<keyword id="KW-1283">Bacterial microcompartment</keyword>
<keyword id="KW-0120">Carbon dioxide fixation</keyword>
<keyword id="KW-1282">Carboxysome</keyword>
<keyword id="KW-0602">Photosynthesis</keyword>
<organism>
    <name type="scientific">Prochlorococcus marinus subsp. pastoris (strain CCMP1986 / NIES-2087 / MED4)</name>
    <dbReference type="NCBI Taxonomy" id="59919"/>
    <lineage>
        <taxon>Bacteria</taxon>
        <taxon>Bacillati</taxon>
        <taxon>Cyanobacteriota</taxon>
        <taxon>Cyanophyceae</taxon>
        <taxon>Synechococcales</taxon>
        <taxon>Prochlorococcaceae</taxon>
        <taxon>Prochlorococcus</taxon>
    </lineage>
</organism>
<comment type="function">
    <text evidence="1 3">The major shell protein of the carboxysome, a polyhedral inclusion where RuBisCO (ribulose bisphosphate carboxylase, ccbL-ccbS) is sequestered. Assembles into hexamers which make sheets that form the facets of the polyhedral carboxysome (By similarity). There are estimated to be 538 CsoS1 hexamers per carboxysome; note this number includes the probable carboxysome shell vertex proteins CsoS4A and CsoS4B (PubMed:22155772).</text>
</comment>
<comment type="subunit">
    <text evidence="1 4">Homohexamer with a small central pore (By similarity). A CsoS1-CsoS1D-CsoS2 complex can be isolated following expression in E.coli (PubMed:25826651). Forms a CsoS2-CsoS1-RuBisCO complex (By similarity).</text>
</comment>
<comment type="subcellular location">
    <subcellularLocation>
        <location evidence="3">Carboxysome</location>
    </subcellularLocation>
    <text evidence="4">This bacterium makes alpha-type carboxysomes.</text>
</comment>
<comment type="domain">
    <text evidence="1">The tight homohexamer forms a small pore which is positively charged.</text>
</comment>
<comment type="similarity">
    <text evidence="6">Belongs to the bacterial microcompartments protein family. CsoS1 subfamily.</text>
</comment>
<comment type="sequence caution" evidence="6">
    <conflict type="erroneous initiation">
        <sequence resource="EMBL-CDS" id="CAE19008"/>
    </conflict>
    <text>Truncated N-terminus.</text>
</comment>
<proteinExistence type="evidence at protein level"/>
<accession>Q7V2D1</accession>